<comment type="catalytic activity">
    <reaction evidence="1">
        <text>tRNA(Gly) + glycine + ATP = glycyl-tRNA(Gly) + AMP + diphosphate</text>
        <dbReference type="Rhea" id="RHEA:16013"/>
        <dbReference type="Rhea" id="RHEA-COMP:9664"/>
        <dbReference type="Rhea" id="RHEA-COMP:9683"/>
        <dbReference type="ChEBI" id="CHEBI:30616"/>
        <dbReference type="ChEBI" id="CHEBI:33019"/>
        <dbReference type="ChEBI" id="CHEBI:57305"/>
        <dbReference type="ChEBI" id="CHEBI:78442"/>
        <dbReference type="ChEBI" id="CHEBI:78522"/>
        <dbReference type="ChEBI" id="CHEBI:456215"/>
        <dbReference type="EC" id="6.1.1.14"/>
    </reaction>
</comment>
<comment type="subunit">
    <text evidence="1">Tetramer of two alpha and two beta subunits.</text>
</comment>
<comment type="subcellular location">
    <subcellularLocation>
        <location evidence="1">Cytoplasm</location>
    </subcellularLocation>
</comment>
<comment type="similarity">
    <text evidence="1">Belongs to the class-II aminoacyl-tRNA synthetase family.</text>
</comment>
<protein>
    <recommendedName>
        <fullName evidence="1">Glycine--tRNA ligase beta subunit</fullName>
        <ecNumber evidence="1">6.1.1.14</ecNumber>
    </recommendedName>
    <alternativeName>
        <fullName evidence="1">Glycyl-tRNA synthetase beta subunit</fullName>
        <shortName evidence="1">GlyRS</shortName>
    </alternativeName>
</protein>
<sequence>MPNLLLELRSEEIPARMQRKAAGDLKKLVTDALVEAGLSYEGAREYWTPRRLALDIHGLTARSADVREERKGPRTDANEKAIEGFLRGAGLSSISEAQVVNDPKKGDFYVAVISKPGRATEEIVAEVMPGIIRDFPWPKSMRWGKASSAPGALRWVRPLQSIVCTFGPEHEETTVIPFEIDGITASNITYGHRFHAPEAIMVRRFDDYAASLERAKVILDAERRKDIILHDARDIAFANGLELVEDEGLLEEVSGLVEWPQVLMGSFEEDYLSIPSEIIRLTIKTNQKCFVTRKQGEDTLSNRFILVSNIEASDGGKEIVHGNGKVVRARLSDALHFWKRDQGNLPDLETLAASAAKFGLDLQKPLDQRMAKLDALDVTFHAKLGTQGARVARIRALAQKLAAVTGADAALTDRAAVLAKADLRTEAVGEFPELQGLMGRKYAALQGENASVAAAIEDHYKPQGPSDRVPEDKVAITLALADKLDTLTGFWAIDEKPTGSKDPFALRRAALGVVRILLERGIRLPLLATTRDGDLLSFFHDRLKVYLRDQGARHDLIDAVLTPEADDLLMVARRVEALTAFITSEDGKNLLAGTKRATQLLAAEEKKGTVIADGVSPALFKLDAEKELFAAISSASKDAANAVAGEDFRSAMEALSKLRGPVDRFFEDVLVNDEDAAIRANRLALLRLIREATGTVADFSKISG</sequence>
<feature type="chain" id="PRO_1000101320" description="Glycine--tRNA ligase beta subunit">
    <location>
        <begin position="1"/>
        <end position="704"/>
    </location>
</feature>
<keyword id="KW-0030">Aminoacyl-tRNA synthetase</keyword>
<keyword id="KW-0067">ATP-binding</keyword>
<keyword id="KW-0963">Cytoplasm</keyword>
<keyword id="KW-0436">Ligase</keyword>
<keyword id="KW-0547">Nucleotide-binding</keyword>
<keyword id="KW-0648">Protein biosynthesis</keyword>
<keyword id="KW-1185">Reference proteome</keyword>
<dbReference type="EC" id="6.1.1.14" evidence="1"/>
<dbReference type="EMBL" id="CP000133">
    <property type="protein sequence ID" value="ABC89701.1"/>
    <property type="molecule type" value="Genomic_DNA"/>
</dbReference>
<dbReference type="RefSeq" id="WP_011424238.1">
    <property type="nucleotide sequence ID" value="NC_007761.1"/>
</dbReference>
<dbReference type="SMR" id="Q2KBT5"/>
<dbReference type="KEGG" id="ret:RHE_CH00890"/>
<dbReference type="eggNOG" id="COG0751">
    <property type="taxonomic scope" value="Bacteria"/>
</dbReference>
<dbReference type="HOGENOM" id="CLU_007220_2_1_5"/>
<dbReference type="OrthoDB" id="9775440at2"/>
<dbReference type="Proteomes" id="UP000001936">
    <property type="component" value="Chromosome"/>
</dbReference>
<dbReference type="GO" id="GO:0005829">
    <property type="term" value="C:cytosol"/>
    <property type="evidence" value="ECO:0007669"/>
    <property type="project" value="TreeGrafter"/>
</dbReference>
<dbReference type="GO" id="GO:0004814">
    <property type="term" value="F:arginine-tRNA ligase activity"/>
    <property type="evidence" value="ECO:0007669"/>
    <property type="project" value="InterPro"/>
</dbReference>
<dbReference type="GO" id="GO:0005524">
    <property type="term" value="F:ATP binding"/>
    <property type="evidence" value="ECO:0007669"/>
    <property type="project" value="UniProtKB-UniRule"/>
</dbReference>
<dbReference type="GO" id="GO:0004820">
    <property type="term" value="F:glycine-tRNA ligase activity"/>
    <property type="evidence" value="ECO:0007669"/>
    <property type="project" value="UniProtKB-UniRule"/>
</dbReference>
<dbReference type="GO" id="GO:0006420">
    <property type="term" value="P:arginyl-tRNA aminoacylation"/>
    <property type="evidence" value="ECO:0007669"/>
    <property type="project" value="InterPro"/>
</dbReference>
<dbReference type="GO" id="GO:0006426">
    <property type="term" value="P:glycyl-tRNA aminoacylation"/>
    <property type="evidence" value="ECO:0007669"/>
    <property type="project" value="UniProtKB-UniRule"/>
</dbReference>
<dbReference type="HAMAP" id="MF_00255">
    <property type="entry name" value="Gly_tRNA_synth_beta"/>
    <property type="match status" value="1"/>
</dbReference>
<dbReference type="InterPro" id="IPR008909">
    <property type="entry name" value="DALR_anticod-bd"/>
</dbReference>
<dbReference type="InterPro" id="IPR015944">
    <property type="entry name" value="Gly-tRNA-synth_bsu"/>
</dbReference>
<dbReference type="InterPro" id="IPR006194">
    <property type="entry name" value="Gly-tRNA-synth_heterodimer"/>
</dbReference>
<dbReference type="NCBIfam" id="TIGR00211">
    <property type="entry name" value="glyS"/>
    <property type="match status" value="1"/>
</dbReference>
<dbReference type="PANTHER" id="PTHR30075:SF2">
    <property type="entry name" value="GLYCINE--TRNA LIGASE, CHLOROPLASTIC_MITOCHONDRIAL 2"/>
    <property type="match status" value="1"/>
</dbReference>
<dbReference type="PANTHER" id="PTHR30075">
    <property type="entry name" value="GLYCYL-TRNA SYNTHETASE"/>
    <property type="match status" value="1"/>
</dbReference>
<dbReference type="Pfam" id="PF05746">
    <property type="entry name" value="DALR_1"/>
    <property type="match status" value="1"/>
</dbReference>
<dbReference type="Pfam" id="PF02092">
    <property type="entry name" value="tRNA_synt_2f"/>
    <property type="match status" value="1"/>
</dbReference>
<dbReference type="PRINTS" id="PR01045">
    <property type="entry name" value="TRNASYNTHGB"/>
</dbReference>
<dbReference type="SUPFAM" id="SSF109604">
    <property type="entry name" value="HD-domain/PDEase-like"/>
    <property type="match status" value="1"/>
</dbReference>
<dbReference type="PROSITE" id="PS50861">
    <property type="entry name" value="AA_TRNA_LIGASE_II_GLYAB"/>
    <property type="match status" value="1"/>
</dbReference>
<accession>Q2KBT5</accession>
<evidence type="ECO:0000255" key="1">
    <source>
        <dbReference type="HAMAP-Rule" id="MF_00255"/>
    </source>
</evidence>
<proteinExistence type="inferred from homology"/>
<gene>
    <name evidence="1" type="primary">glyS</name>
    <name type="ordered locus">RHE_CH00890</name>
</gene>
<reference key="1">
    <citation type="journal article" date="2006" name="Proc. Natl. Acad. Sci. U.S.A.">
        <title>The partitioned Rhizobium etli genome: genetic and metabolic redundancy in seven interacting replicons.</title>
        <authorList>
            <person name="Gonzalez V."/>
            <person name="Santamaria R.I."/>
            <person name="Bustos P."/>
            <person name="Hernandez-Gonzalez I."/>
            <person name="Medrano-Soto A."/>
            <person name="Moreno-Hagelsieb G."/>
            <person name="Janga S.C."/>
            <person name="Ramirez M.A."/>
            <person name="Jimenez-Jacinto V."/>
            <person name="Collado-Vides J."/>
            <person name="Davila G."/>
        </authorList>
    </citation>
    <scope>NUCLEOTIDE SEQUENCE [LARGE SCALE GENOMIC DNA]</scope>
    <source>
        <strain>ATCC 51251 / DSM 11541 / JCM 21823 / NBRC 15573 / CFN 42</strain>
    </source>
</reference>
<organism>
    <name type="scientific">Rhizobium etli (strain ATCC 51251 / DSM 11541 / JCM 21823 / NBRC 15573 / CFN 42)</name>
    <dbReference type="NCBI Taxonomy" id="347834"/>
    <lineage>
        <taxon>Bacteria</taxon>
        <taxon>Pseudomonadati</taxon>
        <taxon>Pseudomonadota</taxon>
        <taxon>Alphaproteobacteria</taxon>
        <taxon>Hyphomicrobiales</taxon>
        <taxon>Rhizobiaceae</taxon>
        <taxon>Rhizobium/Agrobacterium group</taxon>
        <taxon>Rhizobium</taxon>
    </lineage>
</organism>
<name>SYGB_RHIEC</name>